<feature type="chain" id="PRO_0000428790" description="Glutamate dehydrogenase A2">
    <location>
        <begin position="1"/>
        <end position="416"/>
    </location>
</feature>
<feature type="active site" evidence="2">
    <location>
        <position position="105"/>
    </location>
</feature>
<sequence length="416" mass="45332">MTESGPLENMLAQMEQAREYVDIDDGIYERLKSPERTLSVSLPVRMDDGSVEVFDAYRCQFDSARGPYKGGIRYHPTVSEEEVSALAGWMTWKTALVDLPFGGAKGGIVCNPKELSDNEIEQLTRRYTEGIRRMIGPETDIPAPDMNTDPRTMAWVMDTYSVYQGYAVPEVVTGKPPEIGGTDGRVEATGRGVSIITEETFEYFDTDIQDADVAIQGFGNVGSVTADLLSERGANIVAVSDVTGAIHDPTGLDIADVQAYADANGGRLEGYDAEPISNDDLLTLDVDALIPAAIEDVITVDVAERLAADVIVEAANGPTTFDAAQVLSDRGVPVVPDILANAGGVIVSYLEWVQNSQQYSWDVEEVNRDLRQRLTGAFDEMLVAYEDRNIPTLRTAAYTIALERSADAHEFRGLFP</sequence>
<proteinExistence type="inferred from homology"/>
<dbReference type="EC" id="1.4.1.-"/>
<dbReference type="EMBL" id="AY840086">
    <property type="protein sequence ID" value="AAW19066.1"/>
    <property type="molecule type" value="Genomic_DNA"/>
</dbReference>
<dbReference type="PIR" id="B84276">
    <property type="entry name" value="B84276"/>
</dbReference>
<dbReference type="RefSeq" id="WP_010902870.1">
    <property type="nucleotide sequence ID" value="NZ_JBDFRA010000001.1"/>
</dbReference>
<dbReference type="SMR" id="F2Z610"/>
<dbReference type="GeneID" id="89349552"/>
<dbReference type="OMA" id="GNIWEIP"/>
<dbReference type="GO" id="GO:0004352">
    <property type="term" value="F:glutamate dehydrogenase (NAD+) activity"/>
    <property type="evidence" value="ECO:0007669"/>
    <property type="project" value="TreeGrafter"/>
</dbReference>
<dbReference type="GO" id="GO:0006538">
    <property type="term" value="P:glutamate catabolic process"/>
    <property type="evidence" value="ECO:0007669"/>
    <property type="project" value="TreeGrafter"/>
</dbReference>
<dbReference type="CDD" id="cd01076">
    <property type="entry name" value="NAD_bind_1_Glu_DH"/>
    <property type="match status" value="1"/>
</dbReference>
<dbReference type="FunFam" id="3.40.50.10860:FF:000003">
    <property type="entry name" value="Glutamate dehydrogenase"/>
    <property type="match status" value="1"/>
</dbReference>
<dbReference type="Gene3D" id="3.40.50.10860">
    <property type="entry name" value="Leucine Dehydrogenase, chain A, domain 1"/>
    <property type="match status" value="1"/>
</dbReference>
<dbReference type="Gene3D" id="3.40.50.720">
    <property type="entry name" value="NAD(P)-binding Rossmann-like Domain"/>
    <property type="match status" value="1"/>
</dbReference>
<dbReference type="InterPro" id="IPR046346">
    <property type="entry name" value="Aminoacid_DH-like_N_sf"/>
</dbReference>
<dbReference type="InterPro" id="IPR006095">
    <property type="entry name" value="Glu/Leu/Phe/Val/Trp_DH"/>
</dbReference>
<dbReference type="InterPro" id="IPR006096">
    <property type="entry name" value="Glu/Leu/Phe/Val/Trp_DH_C"/>
</dbReference>
<dbReference type="InterPro" id="IPR006097">
    <property type="entry name" value="Glu/Leu/Phe/Val/Trp_DH_dimer"/>
</dbReference>
<dbReference type="InterPro" id="IPR033524">
    <property type="entry name" value="Glu/Leu/Phe/Val_DH_AS"/>
</dbReference>
<dbReference type="InterPro" id="IPR014362">
    <property type="entry name" value="Glu_DH"/>
</dbReference>
<dbReference type="InterPro" id="IPR036291">
    <property type="entry name" value="NAD(P)-bd_dom_sf"/>
</dbReference>
<dbReference type="InterPro" id="IPR033922">
    <property type="entry name" value="NAD_bind_Glu_DH"/>
</dbReference>
<dbReference type="PANTHER" id="PTHR11606">
    <property type="entry name" value="GLUTAMATE DEHYDROGENASE"/>
    <property type="match status" value="1"/>
</dbReference>
<dbReference type="PANTHER" id="PTHR11606:SF13">
    <property type="entry name" value="GLUTAMATE DEHYDROGENASE 1, MITOCHONDRIAL"/>
    <property type="match status" value="1"/>
</dbReference>
<dbReference type="Pfam" id="PF00208">
    <property type="entry name" value="ELFV_dehydrog"/>
    <property type="match status" value="1"/>
</dbReference>
<dbReference type="Pfam" id="PF02812">
    <property type="entry name" value="ELFV_dehydrog_N"/>
    <property type="match status" value="1"/>
</dbReference>
<dbReference type="PIRSF" id="PIRSF000185">
    <property type="entry name" value="Glu_DH"/>
    <property type="match status" value="1"/>
</dbReference>
<dbReference type="PRINTS" id="PR00082">
    <property type="entry name" value="GLFDHDRGNASE"/>
</dbReference>
<dbReference type="SMART" id="SM00839">
    <property type="entry name" value="ELFV_dehydrog"/>
    <property type="match status" value="1"/>
</dbReference>
<dbReference type="SUPFAM" id="SSF53223">
    <property type="entry name" value="Aminoacid dehydrogenase-like, N-terminal domain"/>
    <property type="match status" value="1"/>
</dbReference>
<dbReference type="SUPFAM" id="SSF51735">
    <property type="entry name" value="NAD(P)-binding Rossmann-fold domains"/>
    <property type="match status" value="1"/>
</dbReference>
<dbReference type="PROSITE" id="PS00074">
    <property type="entry name" value="GLFV_DEHYDROGENASE"/>
    <property type="match status" value="1"/>
</dbReference>
<evidence type="ECO:0000250" key="1"/>
<evidence type="ECO:0000255" key="2">
    <source>
        <dbReference type="PROSITE-ProRule" id="PRU10011"/>
    </source>
</evidence>
<evidence type="ECO:0000305" key="3"/>
<evidence type="ECO:0000305" key="4">
    <source>
    </source>
</evidence>
<name>DHE_HALSI</name>
<keyword id="KW-0560">Oxidoreductase</keyword>
<gene>
    <name type="primary">gdhA2</name>
</gene>
<comment type="subunit">
    <text evidence="1">Homohexamer.</text>
</comment>
<comment type="miscellaneous">
    <text evidence="4">Strain NRC-36014 contains 4 distinct glutamate dehydrogenases while strain NRC-1 contains only 3.</text>
</comment>
<comment type="similarity">
    <text evidence="3">Belongs to the Glu/Leu/Phe/Val dehydrogenases family.</text>
</comment>
<accession>F2Z610</accession>
<organism>
    <name type="scientific">Halobacterium salinarum</name>
    <name type="common">Halobacterium halobium</name>
    <dbReference type="NCBI Taxonomy" id="2242"/>
    <lineage>
        <taxon>Archaea</taxon>
        <taxon>Methanobacteriati</taxon>
        <taxon>Methanobacteriota</taxon>
        <taxon>Stenosarchaea group</taxon>
        <taxon>Halobacteria</taxon>
        <taxon>Halobacteriales</taxon>
        <taxon>Halobacteriaceae</taxon>
        <taxon>Halobacterium</taxon>
    </lineage>
</organism>
<protein>
    <recommendedName>
        <fullName>Glutamate dehydrogenase A2</fullName>
        <ecNumber>1.4.1.-</ecNumber>
    </recommendedName>
</protein>
<reference key="1">
    <citation type="journal article" date="2005" name="Gene">
        <title>The discovery of four distinct glutamate dehydrogenase genes in a strain of Halobacterium salinarum.</title>
        <authorList>
            <person name="Ingoldsby L.M."/>
            <person name="Geoghegan K.F."/>
            <person name="Hayden B.M."/>
            <person name="Engel P.C."/>
        </authorList>
    </citation>
    <scope>NUCLEOTIDE SEQUENCE [GENOMIC RNA]</scope>
    <source>
        <strain>NRC-36014</strain>
    </source>
</reference>